<protein>
    <recommendedName>
        <fullName evidence="1">Large ribosomal subunit protein bL25</fullName>
    </recommendedName>
    <alternativeName>
        <fullName evidence="2">50S ribosomal protein L25</fullName>
    </alternativeName>
</protein>
<feature type="chain" id="PRO_0000243109" description="Large ribosomal subunit protein bL25">
    <location>
        <begin position="1"/>
        <end position="94"/>
    </location>
</feature>
<reference key="1">
    <citation type="journal article" date="2006" name="Genome Res.">
        <title>Massive genome erosion and functional adaptations provide insights into the symbiotic lifestyle of Sodalis glossinidius in the tsetse host.</title>
        <authorList>
            <person name="Toh H."/>
            <person name="Weiss B.L."/>
            <person name="Perkin S.A.H."/>
            <person name="Yamashita A."/>
            <person name="Oshima K."/>
            <person name="Hattori M."/>
            <person name="Aksoy S."/>
        </authorList>
    </citation>
    <scope>NUCLEOTIDE SEQUENCE [LARGE SCALE GENOMIC DNA]</scope>
    <source>
        <strain>morsitans</strain>
    </source>
</reference>
<name>RL25_SODGM</name>
<dbReference type="EMBL" id="AP008232">
    <property type="protein sequence ID" value="BAE74847.1"/>
    <property type="molecule type" value="Genomic_DNA"/>
</dbReference>
<dbReference type="RefSeq" id="WP_011411392.1">
    <property type="nucleotide sequence ID" value="NC_007712.1"/>
</dbReference>
<dbReference type="SMR" id="Q2NSM8"/>
<dbReference type="STRING" id="343509.SG1572"/>
<dbReference type="KEGG" id="sgl:SG1572"/>
<dbReference type="eggNOG" id="COG1825">
    <property type="taxonomic scope" value="Bacteria"/>
</dbReference>
<dbReference type="HOGENOM" id="CLU_137946_0_0_6"/>
<dbReference type="OrthoDB" id="9806411at2"/>
<dbReference type="BioCyc" id="SGLO343509:SGP1_RS14255-MONOMER"/>
<dbReference type="Proteomes" id="UP000001932">
    <property type="component" value="Chromosome"/>
</dbReference>
<dbReference type="GO" id="GO:0022625">
    <property type="term" value="C:cytosolic large ribosomal subunit"/>
    <property type="evidence" value="ECO:0007669"/>
    <property type="project" value="TreeGrafter"/>
</dbReference>
<dbReference type="GO" id="GO:0008097">
    <property type="term" value="F:5S rRNA binding"/>
    <property type="evidence" value="ECO:0007669"/>
    <property type="project" value="InterPro"/>
</dbReference>
<dbReference type="GO" id="GO:0003735">
    <property type="term" value="F:structural constituent of ribosome"/>
    <property type="evidence" value="ECO:0007669"/>
    <property type="project" value="InterPro"/>
</dbReference>
<dbReference type="GO" id="GO:0006412">
    <property type="term" value="P:translation"/>
    <property type="evidence" value="ECO:0007669"/>
    <property type="project" value="UniProtKB-UniRule"/>
</dbReference>
<dbReference type="CDD" id="cd00495">
    <property type="entry name" value="Ribosomal_L25_TL5_CTC"/>
    <property type="match status" value="1"/>
</dbReference>
<dbReference type="FunFam" id="2.40.240.10:FF:000002">
    <property type="entry name" value="50S ribosomal protein L25"/>
    <property type="match status" value="1"/>
</dbReference>
<dbReference type="Gene3D" id="2.40.240.10">
    <property type="entry name" value="Ribosomal Protein L25, Chain P"/>
    <property type="match status" value="1"/>
</dbReference>
<dbReference type="HAMAP" id="MF_01336">
    <property type="entry name" value="Ribosomal_bL25"/>
    <property type="match status" value="1"/>
</dbReference>
<dbReference type="InterPro" id="IPR020056">
    <property type="entry name" value="Rbsml_bL25/Gln-tRNA_synth_N"/>
</dbReference>
<dbReference type="InterPro" id="IPR011035">
    <property type="entry name" value="Ribosomal_bL25/Gln-tRNA_synth"/>
</dbReference>
<dbReference type="InterPro" id="IPR020055">
    <property type="entry name" value="Ribosomal_bL25_short"/>
</dbReference>
<dbReference type="InterPro" id="IPR029751">
    <property type="entry name" value="Ribosomal_L25_dom"/>
</dbReference>
<dbReference type="InterPro" id="IPR020930">
    <property type="entry name" value="Ribosomal_uL5_bac-type"/>
</dbReference>
<dbReference type="NCBIfam" id="NF004612">
    <property type="entry name" value="PRK05943.1"/>
    <property type="match status" value="1"/>
</dbReference>
<dbReference type="PANTHER" id="PTHR33284">
    <property type="entry name" value="RIBOSOMAL PROTEIN L25/GLN-TRNA SYNTHETASE, ANTI-CODON-BINDING DOMAIN-CONTAINING PROTEIN"/>
    <property type="match status" value="1"/>
</dbReference>
<dbReference type="PANTHER" id="PTHR33284:SF1">
    <property type="entry name" value="RIBOSOMAL PROTEIN L25_GLN-TRNA SYNTHETASE, ANTI-CODON-BINDING DOMAIN-CONTAINING PROTEIN"/>
    <property type="match status" value="1"/>
</dbReference>
<dbReference type="Pfam" id="PF01386">
    <property type="entry name" value="Ribosomal_L25p"/>
    <property type="match status" value="1"/>
</dbReference>
<dbReference type="SUPFAM" id="SSF50715">
    <property type="entry name" value="Ribosomal protein L25-like"/>
    <property type="match status" value="1"/>
</dbReference>
<keyword id="KW-0687">Ribonucleoprotein</keyword>
<keyword id="KW-0689">Ribosomal protein</keyword>
<keyword id="KW-0694">RNA-binding</keyword>
<keyword id="KW-0699">rRNA-binding</keyword>
<comment type="function">
    <text evidence="1">This is one of the proteins that binds to the 5S RNA in the ribosome where it forms part of the central protuberance.</text>
</comment>
<comment type="subunit">
    <text evidence="1">Part of the 50S ribosomal subunit; part of the 5S rRNA/L5/L18/L25 subcomplex. Contacts the 5S rRNA. Binds to the 5S rRNA independently of L5 and L18.</text>
</comment>
<comment type="similarity">
    <text evidence="1">Belongs to the bacterial ribosomal protein bL25 family.</text>
</comment>
<proteinExistence type="inferred from homology"/>
<evidence type="ECO:0000255" key="1">
    <source>
        <dbReference type="HAMAP-Rule" id="MF_01336"/>
    </source>
</evidence>
<evidence type="ECO:0000305" key="2"/>
<organism>
    <name type="scientific">Sodalis glossinidius (strain morsitans)</name>
    <dbReference type="NCBI Taxonomy" id="343509"/>
    <lineage>
        <taxon>Bacteria</taxon>
        <taxon>Pseudomonadati</taxon>
        <taxon>Pseudomonadota</taxon>
        <taxon>Gammaproteobacteria</taxon>
        <taxon>Enterobacterales</taxon>
        <taxon>Bruguierivoracaceae</taxon>
        <taxon>Sodalis</taxon>
    </lineage>
</organism>
<gene>
    <name evidence="1" type="primary">rplY</name>
    <name type="ordered locus">SG1572</name>
</gene>
<sequence>MLTINAVIRKDQGKGASRRLRLANKFPAIVYGGTKAPVAIELDHDIVLNTQTKEGFYTDVLALVIDGKESKVKVQAVQRHSFKPKLTHIDFVRA</sequence>
<accession>Q2NSM8</accession>